<protein>
    <recommendedName>
        <fullName evidence="1">Large ribosomal subunit protein eL18</fullName>
    </recommendedName>
    <alternativeName>
        <fullName evidence="2">50S ribosomal protein L18e</fullName>
    </alternativeName>
</protein>
<name>RL18E_THEAC</name>
<feature type="chain" id="PRO_0000132805" description="Large ribosomal subunit protein eL18">
    <location>
        <begin position="1"/>
        <end position="120"/>
    </location>
</feature>
<sequence length="120" mass="13186">MDVSNKVSRALTQEIETLANISRESGSKLWRDIAERLASRRRGYASVNLSKIDKYAKDGDIIVVPGYVLGVGKISKKVTVGAYKFSKTAMEKLSNSGCAFMNISEIAKDNPKGTNVKIMR</sequence>
<accession>Q9HL06</accession>
<reference key="1">
    <citation type="journal article" date="2000" name="Nature">
        <title>The genome sequence of the thermoacidophilic scavenger Thermoplasma acidophilum.</title>
        <authorList>
            <person name="Ruepp A."/>
            <person name="Graml W."/>
            <person name="Santos-Martinez M.-L."/>
            <person name="Koretke K.K."/>
            <person name="Volker C."/>
            <person name="Mewes H.-W."/>
            <person name="Frishman D."/>
            <person name="Stocker S."/>
            <person name="Lupas A.N."/>
            <person name="Baumeister W."/>
        </authorList>
    </citation>
    <scope>NUCLEOTIDE SEQUENCE [LARGE SCALE GENOMIC DNA]</scope>
    <source>
        <strain>ATCC 25905 / DSM 1728 / JCM 9062 / NBRC 15155 / AMRC-C165</strain>
    </source>
</reference>
<gene>
    <name evidence="1" type="primary">rpl18e</name>
    <name type="ordered locus">Ta0434</name>
</gene>
<comment type="similarity">
    <text evidence="1">Belongs to the eukaryotic ribosomal protein eL18 family.</text>
</comment>
<proteinExistence type="inferred from homology"/>
<evidence type="ECO:0000255" key="1">
    <source>
        <dbReference type="HAMAP-Rule" id="MF_00329"/>
    </source>
</evidence>
<evidence type="ECO:0000305" key="2"/>
<dbReference type="EMBL" id="AL445064">
    <property type="protein sequence ID" value="CAC11576.1"/>
    <property type="molecule type" value="Genomic_DNA"/>
</dbReference>
<dbReference type="SMR" id="Q9HL06"/>
<dbReference type="FunCoup" id="Q9HL06">
    <property type="interactions" value="52"/>
</dbReference>
<dbReference type="STRING" id="273075.gene:9571654"/>
<dbReference type="PaxDb" id="273075-Ta0434"/>
<dbReference type="EnsemblBacteria" id="CAC11576">
    <property type="protein sequence ID" value="CAC11576"/>
    <property type="gene ID" value="CAC11576"/>
</dbReference>
<dbReference type="KEGG" id="tac:Ta0434"/>
<dbReference type="eggNOG" id="arCOG00780">
    <property type="taxonomic scope" value="Archaea"/>
</dbReference>
<dbReference type="HOGENOM" id="CLU_146465_0_0_2"/>
<dbReference type="InParanoid" id="Q9HL06"/>
<dbReference type="OrthoDB" id="11309at2157"/>
<dbReference type="Proteomes" id="UP000001024">
    <property type="component" value="Chromosome"/>
</dbReference>
<dbReference type="GO" id="GO:0022625">
    <property type="term" value="C:cytosolic large ribosomal subunit"/>
    <property type="evidence" value="ECO:0007669"/>
    <property type="project" value="TreeGrafter"/>
</dbReference>
<dbReference type="GO" id="GO:0003723">
    <property type="term" value="F:RNA binding"/>
    <property type="evidence" value="ECO:0007669"/>
    <property type="project" value="TreeGrafter"/>
</dbReference>
<dbReference type="GO" id="GO:0003735">
    <property type="term" value="F:structural constituent of ribosome"/>
    <property type="evidence" value="ECO:0007669"/>
    <property type="project" value="InterPro"/>
</dbReference>
<dbReference type="GO" id="GO:0006412">
    <property type="term" value="P:translation"/>
    <property type="evidence" value="ECO:0007669"/>
    <property type="project" value="UniProtKB-UniRule"/>
</dbReference>
<dbReference type="Gene3D" id="3.100.10.10">
    <property type="match status" value="1"/>
</dbReference>
<dbReference type="HAMAP" id="MF_00329">
    <property type="entry name" value="Ribosomal_eL18"/>
    <property type="match status" value="1"/>
</dbReference>
<dbReference type="InterPro" id="IPR000039">
    <property type="entry name" value="Ribosomal_eL18"/>
</dbReference>
<dbReference type="InterPro" id="IPR021132">
    <property type="entry name" value="Ribosomal_eL18/eL18-A/B/_CS"/>
</dbReference>
<dbReference type="InterPro" id="IPR022947">
    <property type="entry name" value="Ribosomal_eL18_arc"/>
</dbReference>
<dbReference type="InterPro" id="IPR021131">
    <property type="entry name" value="Ribosomal_uL15/eL18"/>
</dbReference>
<dbReference type="InterPro" id="IPR036227">
    <property type="entry name" value="Ribosomal_uL15/eL18_sf"/>
</dbReference>
<dbReference type="NCBIfam" id="NF003079">
    <property type="entry name" value="PRK04005.1"/>
    <property type="match status" value="1"/>
</dbReference>
<dbReference type="PANTHER" id="PTHR10934">
    <property type="entry name" value="60S RIBOSOMAL PROTEIN L18"/>
    <property type="match status" value="1"/>
</dbReference>
<dbReference type="PANTHER" id="PTHR10934:SF2">
    <property type="entry name" value="LARGE RIBOSOMAL SUBUNIT PROTEIN EL18"/>
    <property type="match status" value="1"/>
</dbReference>
<dbReference type="Pfam" id="PF17135">
    <property type="entry name" value="Ribosomal_L18"/>
    <property type="match status" value="1"/>
</dbReference>
<dbReference type="SUPFAM" id="SSF52080">
    <property type="entry name" value="Ribosomal proteins L15p and L18e"/>
    <property type="match status" value="1"/>
</dbReference>
<dbReference type="PROSITE" id="PS01106">
    <property type="entry name" value="RIBOSOMAL_L18E"/>
    <property type="match status" value="1"/>
</dbReference>
<keyword id="KW-1185">Reference proteome</keyword>
<keyword id="KW-0687">Ribonucleoprotein</keyword>
<keyword id="KW-0689">Ribosomal protein</keyword>
<organism>
    <name type="scientific">Thermoplasma acidophilum (strain ATCC 25905 / DSM 1728 / JCM 9062 / NBRC 15155 / AMRC-C165)</name>
    <dbReference type="NCBI Taxonomy" id="273075"/>
    <lineage>
        <taxon>Archaea</taxon>
        <taxon>Methanobacteriati</taxon>
        <taxon>Thermoplasmatota</taxon>
        <taxon>Thermoplasmata</taxon>
        <taxon>Thermoplasmatales</taxon>
        <taxon>Thermoplasmataceae</taxon>
        <taxon>Thermoplasma</taxon>
    </lineage>
</organism>